<protein>
    <recommendedName>
        <fullName>Double homeobox protein 4-like protein 3</fullName>
    </recommendedName>
</protein>
<feature type="chain" id="PRO_0000405251" description="Double homeobox protein 4-like protein 3">
    <location>
        <begin position="1"/>
        <end position="424"/>
    </location>
</feature>
<feature type="DNA-binding region" description="Homeobox 1" evidence="2">
    <location>
        <begin position="19"/>
        <end position="78"/>
    </location>
</feature>
<feature type="DNA-binding region" description="Homeobox 2" evidence="2">
    <location>
        <begin position="94"/>
        <end position="153"/>
    </location>
</feature>
<feature type="region of interest" description="Disordered" evidence="3">
    <location>
        <begin position="1"/>
        <end position="24"/>
    </location>
</feature>
<feature type="region of interest" description="Disordered" evidence="3">
    <location>
        <begin position="72"/>
        <end position="102"/>
    </location>
</feature>
<feature type="region of interest" description="Disordered" evidence="3">
    <location>
        <begin position="148"/>
        <end position="167"/>
    </location>
</feature>
<feature type="region of interest" description="Disordered" evidence="3">
    <location>
        <begin position="218"/>
        <end position="362"/>
    </location>
</feature>
<feature type="region of interest" description="Disordered" evidence="3">
    <location>
        <begin position="388"/>
        <end position="414"/>
    </location>
</feature>
<feature type="compositionally biased region" description="Polar residues" evidence="3">
    <location>
        <begin position="1"/>
        <end position="10"/>
    </location>
</feature>
<feature type="compositionally biased region" description="Basic and acidic residues" evidence="3">
    <location>
        <begin position="265"/>
        <end position="274"/>
    </location>
</feature>
<feature type="compositionally biased region" description="Low complexity" evidence="3">
    <location>
        <begin position="278"/>
        <end position="302"/>
    </location>
</feature>
<feature type="compositionally biased region" description="Low complexity" evidence="3">
    <location>
        <begin position="319"/>
        <end position="329"/>
    </location>
</feature>
<dbReference type="EMBL" id="AC126281">
    <property type="status" value="NOT_ANNOTATED_CDS"/>
    <property type="molecule type" value="Genomic_DNA"/>
</dbReference>
<dbReference type="SMR" id="P0CJ86"/>
<dbReference type="FunCoup" id="P0CJ86">
    <property type="interactions" value="16"/>
</dbReference>
<dbReference type="IntAct" id="P0CJ86">
    <property type="interactions" value="1"/>
</dbReference>
<dbReference type="GlyGen" id="P0CJ86">
    <property type="glycosylation" value="1 site"/>
</dbReference>
<dbReference type="iPTMnet" id="P0CJ86"/>
<dbReference type="PhosphoSitePlus" id="P0CJ86"/>
<dbReference type="BioMuta" id="HGNC:38688"/>
<dbReference type="DMDM" id="325530033"/>
<dbReference type="MassIVE" id="P0CJ86"/>
<dbReference type="AGR" id="HGNC:38688"/>
<dbReference type="GeneCards" id="DUX4L3"/>
<dbReference type="HGNC" id="HGNC:38688">
    <property type="gene designation" value="DUX4L3"/>
</dbReference>
<dbReference type="neXtProt" id="NX_P0CJ86"/>
<dbReference type="InParanoid" id="P0CJ86"/>
<dbReference type="PAN-GO" id="P0CJ86">
    <property type="GO annotations" value="4 GO annotations based on evolutionary models"/>
</dbReference>
<dbReference type="PhylomeDB" id="P0CJ86"/>
<dbReference type="Pharos" id="P0CJ86">
    <property type="development level" value="Tdark"/>
</dbReference>
<dbReference type="PRO" id="PR:P0CJ86"/>
<dbReference type="Proteomes" id="UP000005640">
    <property type="component" value="Unplaced"/>
</dbReference>
<dbReference type="RNAct" id="P0CJ86">
    <property type="molecule type" value="protein"/>
</dbReference>
<dbReference type="GO" id="GO:0000785">
    <property type="term" value="C:chromatin"/>
    <property type="evidence" value="ECO:0000247"/>
    <property type="project" value="NTNU_SB"/>
</dbReference>
<dbReference type="GO" id="GO:0005634">
    <property type="term" value="C:nucleus"/>
    <property type="evidence" value="ECO:0000318"/>
    <property type="project" value="GO_Central"/>
</dbReference>
<dbReference type="GO" id="GO:0000981">
    <property type="term" value="F:DNA-binding transcription factor activity, RNA polymerase II-specific"/>
    <property type="evidence" value="ECO:0000247"/>
    <property type="project" value="NTNU_SB"/>
</dbReference>
<dbReference type="GO" id="GO:0000977">
    <property type="term" value="F:RNA polymerase II transcription regulatory region sequence-specific DNA binding"/>
    <property type="evidence" value="ECO:0000318"/>
    <property type="project" value="GO_Central"/>
</dbReference>
<dbReference type="GO" id="GO:0006357">
    <property type="term" value="P:regulation of transcription by RNA polymerase II"/>
    <property type="evidence" value="ECO:0000318"/>
    <property type="project" value="GO_Central"/>
</dbReference>
<dbReference type="CDD" id="cd00086">
    <property type="entry name" value="homeodomain"/>
    <property type="match status" value="2"/>
</dbReference>
<dbReference type="FunFam" id="1.10.10.60:FF:000325">
    <property type="entry name" value="Double homeobox protein 4"/>
    <property type="match status" value="1"/>
</dbReference>
<dbReference type="FunFam" id="1.10.10.60:FF:000354">
    <property type="entry name" value="Double homeobox protein 4"/>
    <property type="match status" value="1"/>
</dbReference>
<dbReference type="Gene3D" id="1.10.10.60">
    <property type="entry name" value="Homeodomain-like"/>
    <property type="match status" value="2"/>
</dbReference>
<dbReference type="InterPro" id="IPR001356">
    <property type="entry name" value="HD"/>
</dbReference>
<dbReference type="InterPro" id="IPR051306">
    <property type="entry name" value="Homeobox_regulator"/>
</dbReference>
<dbReference type="InterPro" id="IPR009057">
    <property type="entry name" value="Homeodomain-like_sf"/>
</dbReference>
<dbReference type="InterPro" id="IPR000047">
    <property type="entry name" value="HTH_motif"/>
</dbReference>
<dbReference type="PANTHER" id="PTHR46123:SF3">
    <property type="entry name" value="DOUBLE HOMEOBOX PROTEIN 1-RELATED"/>
    <property type="match status" value="1"/>
</dbReference>
<dbReference type="PANTHER" id="PTHR46123">
    <property type="entry name" value="MIX-TYPE HOMEOBOX GENE 1-RELATED"/>
    <property type="match status" value="1"/>
</dbReference>
<dbReference type="Pfam" id="PF00046">
    <property type="entry name" value="Homeodomain"/>
    <property type="match status" value="2"/>
</dbReference>
<dbReference type="PRINTS" id="PR00031">
    <property type="entry name" value="HTHREPRESSR"/>
</dbReference>
<dbReference type="SMART" id="SM00389">
    <property type="entry name" value="HOX"/>
    <property type="match status" value="2"/>
</dbReference>
<dbReference type="SUPFAM" id="SSF46689">
    <property type="entry name" value="Homeodomain-like"/>
    <property type="match status" value="2"/>
</dbReference>
<dbReference type="PROSITE" id="PS50071">
    <property type="entry name" value="HOMEOBOX_2"/>
    <property type="match status" value="2"/>
</dbReference>
<reference key="1">
    <citation type="journal article" date="2005" name="Nature">
        <title>Generation and annotation of the DNA sequences of human chromosomes 2 and 4.</title>
        <authorList>
            <person name="Hillier L.W."/>
            <person name="Graves T.A."/>
            <person name="Fulton R.S."/>
            <person name="Fulton L.A."/>
            <person name="Pepin K.H."/>
            <person name="Minx P."/>
            <person name="Wagner-McPherson C."/>
            <person name="Layman D."/>
            <person name="Wylie K."/>
            <person name="Sekhon M."/>
            <person name="Becker M.C."/>
            <person name="Fewell G.A."/>
            <person name="Delehaunty K.D."/>
            <person name="Miner T.L."/>
            <person name="Nash W.E."/>
            <person name="Kremitzki C."/>
            <person name="Oddy L."/>
            <person name="Du H."/>
            <person name="Sun H."/>
            <person name="Bradshaw-Cordum H."/>
            <person name="Ali J."/>
            <person name="Carter J."/>
            <person name="Cordes M."/>
            <person name="Harris A."/>
            <person name="Isak A."/>
            <person name="van Brunt A."/>
            <person name="Nguyen C."/>
            <person name="Du F."/>
            <person name="Courtney L."/>
            <person name="Kalicki J."/>
            <person name="Ozersky P."/>
            <person name="Abbott S."/>
            <person name="Armstrong J."/>
            <person name="Belter E.A."/>
            <person name="Caruso L."/>
            <person name="Cedroni M."/>
            <person name="Cotton M."/>
            <person name="Davidson T."/>
            <person name="Desai A."/>
            <person name="Elliott G."/>
            <person name="Erb T."/>
            <person name="Fronick C."/>
            <person name="Gaige T."/>
            <person name="Haakenson W."/>
            <person name="Haglund K."/>
            <person name="Holmes A."/>
            <person name="Harkins R."/>
            <person name="Kim K."/>
            <person name="Kruchowski S.S."/>
            <person name="Strong C.M."/>
            <person name="Grewal N."/>
            <person name="Goyea E."/>
            <person name="Hou S."/>
            <person name="Levy A."/>
            <person name="Martinka S."/>
            <person name="Mead K."/>
            <person name="McLellan M.D."/>
            <person name="Meyer R."/>
            <person name="Randall-Maher J."/>
            <person name="Tomlinson C."/>
            <person name="Dauphin-Kohlberg S."/>
            <person name="Kozlowicz-Reilly A."/>
            <person name="Shah N."/>
            <person name="Swearengen-Shahid S."/>
            <person name="Snider J."/>
            <person name="Strong J.T."/>
            <person name="Thompson J."/>
            <person name="Yoakum M."/>
            <person name="Leonard S."/>
            <person name="Pearman C."/>
            <person name="Trani L."/>
            <person name="Radionenko M."/>
            <person name="Waligorski J.E."/>
            <person name="Wang C."/>
            <person name="Rock S.M."/>
            <person name="Tin-Wollam A.-M."/>
            <person name="Maupin R."/>
            <person name="Latreille P."/>
            <person name="Wendl M.C."/>
            <person name="Yang S.-P."/>
            <person name="Pohl C."/>
            <person name="Wallis J.W."/>
            <person name="Spieth J."/>
            <person name="Bieri T.A."/>
            <person name="Berkowicz N."/>
            <person name="Nelson J.O."/>
            <person name="Osborne J."/>
            <person name="Ding L."/>
            <person name="Meyer R."/>
            <person name="Sabo A."/>
            <person name="Shotland Y."/>
            <person name="Sinha P."/>
            <person name="Wohldmann P.E."/>
            <person name="Cook L.L."/>
            <person name="Hickenbotham M.T."/>
            <person name="Eldred J."/>
            <person name="Williams D."/>
            <person name="Jones T.A."/>
            <person name="She X."/>
            <person name="Ciccarelli F.D."/>
            <person name="Izaurralde E."/>
            <person name="Taylor J."/>
            <person name="Schmutz J."/>
            <person name="Myers R.M."/>
            <person name="Cox D.R."/>
            <person name="Huang X."/>
            <person name="McPherson J.D."/>
            <person name="Mardis E.R."/>
            <person name="Clifton S.W."/>
            <person name="Warren W.C."/>
            <person name="Chinwalla A.T."/>
            <person name="Eddy S.R."/>
            <person name="Marra M.A."/>
            <person name="Ovcharenko I."/>
            <person name="Furey T.S."/>
            <person name="Miller W."/>
            <person name="Eichler E.E."/>
            <person name="Bork P."/>
            <person name="Suyama M."/>
            <person name="Torrents D."/>
            <person name="Waterston R.H."/>
            <person name="Wilson R.K."/>
        </authorList>
    </citation>
    <scope>NUCLEOTIDE SEQUENCE [LARGE SCALE GENOMIC DNA]</scope>
</reference>
<keyword id="KW-0238">DNA-binding</keyword>
<keyword id="KW-0371">Homeobox</keyword>
<keyword id="KW-0539">Nucleus</keyword>
<keyword id="KW-1185">Reference proteome</keyword>
<keyword id="KW-0677">Repeat</keyword>
<keyword id="KW-0804">Transcription</keyword>
<keyword id="KW-0805">Transcription regulation</keyword>
<proteinExistence type="inferred from homology"/>
<name>DU4L3_HUMAN</name>
<comment type="function">
    <text evidence="1">May be involved in transcriptional regulation.</text>
</comment>
<comment type="subcellular location">
    <subcellularLocation>
        <location evidence="2">Nucleus</location>
    </subcellularLocation>
</comment>
<evidence type="ECO:0000250" key="1"/>
<evidence type="ECO:0000255" key="2">
    <source>
        <dbReference type="PROSITE-ProRule" id="PRU00108"/>
    </source>
</evidence>
<evidence type="ECO:0000256" key="3">
    <source>
        <dbReference type="SAM" id="MobiDB-lite"/>
    </source>
</evidence>
<accession>P0CJ86</accession>
<sequence length="424" mass="44926">MALPTPSDSTLPAEARGRGRRRRLVWTPSQSEALRACFERNPYPGIATRERLAQAIGIPEPRVQIWFQNERSRQLRQHRRESRPWPGRRGPPEGRRKRTAVTGSQTALLLRAFEKDRFPGIAAREELARETGLPESRIQIWFQNRRARHPGQGGRAPAQAGGLCSAAPGGGHPAPSWVAFAHTGAWGTGLPAPHVPCAPGALPQGAFVSQAARAAPALQPSQAAPAEGVSQPAPARGDFAYAAPAPPDGALSHPQAPRWPPHPGKSREDRDPQRDGLPGPCAVAQPGPAQAGPQGQGVLAPPTSQGSPWWGWGRGPQVAGAAWEPQAGAAPPPQPAPPDASASARQGQMQGIPAPSQALQEPAPWSALPCGLLLDELLASPEFLQQAQPLLETEAPGELEASEEAASLEAPLSEEEYRALLEEL</sequence>
<gene>
    <name type="primary">DUX4L3</name>
</gene>
<organism>
    <name type="scientific">Homo sapiens</name>
    <name type="common">Human</name>
    <dbReference type="NCBI Taxonomy" id="9606"/>
    <lineage>
        <taxon>Eukaryota</taxon>
        <taxon>Metazoa</taxon>
        <taxon>Chordata</taxon>
        <taxon>Craniata</taxon>
        <taxon>Vertebrata</taxon>
        <taxon>Euteleostomi</taxon>
        <taxon>Mammalia</taxon>
        <taxon>Eutheria</taxon>
        <taxon>Euarchontoglires</taxon>
        <taxon>Primates</taxon>
        <taxon>Haplorrhini</taxon>
        <taxon>Catarrhini</taxon>
        <taxon>Hominidae</taxon>
        <taxon>Homo</taxon>
    </lineage>
</organism>